<reference key="1">
    <citation type="journal article" date="2006" name="Theor. Appl. Genet.">
        <title>Complete chloroplast genome sequences of Solanum bulbocastanum, Solanum lycopersicum and comparative analyses with other Solanaceae genomes.</title>
        <authorList>
            <person name="Daniell H."/>
            <person name="Lee S.-B."/>
            <person name="Grevich J."/>
            <person name="Saski C."/>
            <person name="Quesada-Vargas T."/>
            <person name="Guda C."/>
            <person name="Tomkins J."/>
            <person name="Jansen R.K."/>
        </authorList>
    </citation>
    <scope>NUCLEOTIDE SEQUENCE [LARGE SCALE GENOMIC DNA]</scope>
    <source>
        <strain>cv. LA3023</strain>
    </source>
</reference>
<reference key="2">
    <citation type="journal article" date="2006" name="J. Mol. Evol.">
        <title>Sequence of the tomato chloroplast DNA and evolutionary comparison of solanaceous plastid genomes.</title>
        <authorList>
            <person name="Kahlau S."/>
            <person name="Aspinall S."/>
            <person name="Gray J.C."/>
            <person name="Bock R."/>
        </authorList>
    </citation>
    <scope>NUCLEOTIDE SEQUENCE [LARGE SCALE GENOMIC DNA]</scope>
    <source>
        <strain>cv. IPA-6</strain>
    </source>
</reference>
<name>NU4C_SOLLC</name>
<evidence type="ECO:0000250" key="1"/>
<evidence type="ECO:0000255" key="2">
    <source>
        <dbReference type="HAMAP-Rule" id="MF_00491"/>
    </source>
</evidence>
<accession>Q2A7B8</accession>
<accession>Q2MI50</accession>
<feature type="chain" id="PRO_0000275920" description="NAD(P)H-quinone oxidoreductase chain 4, chloroplastic">
    <location>
        <begin position="1"/>
        <end position="500"/>
    </location>
</feature>
<feature type="transmembrane region" description="Helical" evidence="2">
    <location>
        <begin position="4"/>
        <end position="24"/>
    </location>
</feature>
<feature type="transmembrane region" description="Helical" evidence="2">
    <location>
        <begin position="35"/>
        <end position="55"/>
    </location>
</feature>
<feature type="transmembrane region" description="Helical" evidence="2">
    <location>
        <begin position="87"/>
        <end position="107"/>
    </location>
</feature>
<feature type="transmembrane region" description="Helical" evidence="2">
    <location>
        <begin position="113"/>
        <end position="130"/>
    </location>
</feature>
<feature type="transmembrane region" description="Helical" evidence="2">
    <location>
        <begin position="134"/>
        <end position="154"/>
    </location>
</feature>
<feature type="transmembrane region" description="Helical" evidence="2">
    <location>
        <begin position="167"/>
        <end position="187"/>
    </location>
</feature>
<feature type="transmembrane region" description="Helical" evidence="2">
    <location>
        <begin position="208"/>
        <end position="228"/>
    </location>
</feature>
<feature type="transmembrane region" description="Helical" evidence="2">
    <location>
        <begin position="242"/>
        <end position="262"/>
    </location>
</feature>
<feature type="transmembrane region" description="Helical" evidence="2">
    <location>
        <begin position="272"/>
        <end position="292"/>
    </location>
</feature>
<feature type="transmembrane region" description="Helical" evidence="2">
    <location>
        <begin position="305"/>
        <end position="325"/>
    </location>
</feature>
<feature type="transmembrane region" description="Helical" evidence="2">
    <location>
        <begin position="330"/>
        <end position="350"/>
    </location>
</feature>
<feature type="transmembrane region" description="Helical" evidence="2">
    <location>
        <begin position="386"/>
        <end position="406"/>
    </location>
</feature>
<feature type="transmembrane region" description="Helical" evidence="2">
    <location>
        <begin position="416"/>
        <end position="436"/>
    </location>
</feature>
<feature type="transmembrane region" description="Helical" evidence="2">
    <location>
        <begin position="462"/>
        <end position="482"/>
    </location>
</feature>
<protein>
    <recommendedName>
        <fullName evidence="2">NAD(P)H-quinone oxidoreductase chain 4, chloroplastic</fullName>
        <ecNumber evidence="2">7.1.1.-</ecNumber>
    </recommendedName>
    <alternativeName>
        <fullName evidence="2">NAD(P)H dehydrogenase, chain 4</fullName>
    </alternativeName>
    <alternativeName>
        <fullName evidence="2">NADH-plastoquinone oxidoreductase chain 4</fullName>
    </alternativeName>
</protein>
<keyword id="KW-0150">Chloroplast</keyword>
<keyword id="KW-0472">Membrane</keyword>
<keyword id="KW-0520">NAD</keyword>
<keyword id="KW-0521">NADP</keyword>
<keyword id="KW-0934">Plastid</keyword>
<keyword id="KW-0618">Plastoquinone</keyword>
<keyword id="KW-0874">Quinone</keyword>
<keyword id="KW-1185">Reference proteome</keyword>
<keyword id="KW-0691">RNA editing</keyword>
<keyword id="KW-0793">Thylakoid</keyword>
<keyword id="KW-1278">Translocase</keyword>
<keyword id="KW-0812">Transmembrane</keyword>
<keyword id="KW-1133">Transmembrane helix</keyword>
<proteinExistence type="inferred from homology"/>
<comment type="catalytic activity">
    <reaction evidence="2">
        <text>a plastoquinone + NADH + (n+1) H(+)(in) = a plastoquinol + NAD(+) + n H(+)(out)</text>
        <dbReference type="Rhea" id="RHEA:42608"/>
        <dbReference type="Rhea" id="RHEA-COMP:9561"/>
        <dbReference type="Rhea" id="RHEA-COMP:9562"/>
        <dbReference type="ChEBI" id="CHEBI:15378"/>
        <dbReference type="ChEBI" id="CHEBI:17757"/>
        <dbReference type="ChEBI" id="CHEBI:57540"/>
        <dbReference type="ChEBI" id="CHEBI:57945"/>
        <dbReference type="ChEBI" id="CHEBI:62192"/>
    </reaction>
</comment>
<comment type="catalytic activity">
    <reaction evidence="2">
        <text>a plastoquinone + NADPH + (n+1) H(+)(in) = a plastoquinol + NADP(+) + n H(+)(out)</text>
        <dbReference type="Rhea" id="RHEA:42612"/>
        <dbReference type="Rhea" id="RHEA-COMP:9561"/>
        <dbReference type="Rhea" id="RHEA-COMP:9562"/>
        <dbReference type="ChEBI" id="CHEBI:15378"/>
        <dbReference type="ChEBI" id="CHEBI:17757"/>
        <dbReference type="ChEBI" id="CHEBI:57783"/>
        <dbReference type="ChEBI" id="CHEBI:58349"/>
        <dbReference type="ChEBI" id="CHEBI:62192"/>
    </reaction>
</comment>
<comment type="subcellular location">
    <subcellularLocation>
        <location evidence="2">Plastid</location>
        <location evidence="2">Chloroplast thylakoid membrane</location>
        <topology evidence="2">Multi-pass membrane protein</topology>
    </subcellularLocation>
</comment>
<comment type="RNA editing">
    <location>
        <position position="1" evidence="1"/>
    </location>
    <text evidence="1">The initiator methionine is created by RNA editing.</text>
</comment>
<comment type="similarity">
    <text evidence="2">Belongs to the complex I subunit 4 family.</text>
</comment>
<geneLocation type="chloroplast"/>
<gene>
    <name evidence="2" type="primary">ndhD</name>
</gene>
<organism>
    <name type="scientific">Solanum lycopersicum</name>
    <name type="common">Tomato</name>
    <name type="synonym">Lycopersicon esculentum</name>
    <dbReference type="NCBI Taxonomy" id="4081"/>
    <lineage>
        <taxon>Eukaryota</taxon>
        <taxon>Viridiplantae</taxon>
        <taxon>Streptophyta</taxon>
        <taxon>Embryophyta</taxon>
        <taxon>Tracheophyta</taxon>
        <taxon>Spermatophyta</taxon>
        <taxon>Magnoliopsida</taxon>
        <taxon>eudicotyledons</taxon>
        <taxon>Gunneridae</taxon>
        <taxon>Pentapetalae</taxon>
        <taxon>asterids</taxon>
        <taxon>lamiids</taxon>
        <taxon>Solanales</taxon>
        <taxon>Solanaceae</taxon>
        <taxon>Solanoideae</taxon>
        <taxon>Solaneae</taxon>
        <taxon>Solanum</taxon>
        <taxon>Solanum subgen. Lycopersicon</taxon>
    </lineage>
</organism>
<sequence length="500" mass="56315">MNYFPWLTIIVVFPIFAGSLIFFLPHKGNRVIRWYTICICILELLLTTYAFCYHFQSDDPLIQLVEDYKWIDFFDFHWRLGIDGLSIGPILLTGFITTLATLAAWPVTRDSRLFHFLMLAMYSGQIGLFSSRDLLLFFIMWELELIPVYLLLAMWGGKKRLYSATKFILYTAGGSVFLLMGVLGVALYGSNEPTLNFETSVNQSYPVVLEIIFYIGFFIAFAVKSPIIPLHTWLPDTHGEAHYSTCMLLAGILLKMGAYGLIRINMELLPHAHSIFSPWLMIIGTIQIIYAASTSLGQRNLKKRIAYSSVSHMGFIIIGISSLTDTGLNGALLQIISHGFIGAALFFLAGTTYDRIRLVYLDEMGGIAIPMPKMFTMFSSFSMASLALPGMSGFVAELIVFFGIITGQKYLLMPKLLITFVMAIGIILTPIYSLSMPRQMFYGYKLFNAPKDSFFDSGPRELFLSISIFLPVIGIGIYPDFVLSLAVDKVEVILSNFFYR</sequence>
<dbReference type="EC" id="7.1.1.-" evidence="2"/>
<dbReference type="EMBL" id="DQ347959">
    <property type="protein sequence ID" value="ABC56351.1"/>
    <property type="status" value="ALT_SEQ"/>
    <property type="molecule type" value="Genomic_DNA"/>
</dbReference>
<dbReference type="EMBL" id="AM087200">
    <property type="protein sequence ID" value="CAJ32445.2"/>
    <property type="molecule type" value="Genomic_DNA"/>
</dbReference>
<dbReference type="RefSeq" id="AP_004979.1">
    <property type="nucleotide sequence ID" value="AC_000188.1"/>
</dbReference>
<dbReference type="RefSeq" id="YP_008563139.1">
    <property type="nucleotide sequence ID" value="NC_007898.3"/>
</dbReference>
<dbReference type="SMR" id="Q2A7B8"/>
<dbReference type="FunCoup" id="Q2A7B8">
    <property type="interactions" value="14"/>
</dbReference>
<dbReference type="STRING" id="4081.Q2A7B8"/>
<dbReference type="PaxDb" id="4081-Solyc10g047420.1.1"/>
<dbReference type="GeneID" id="3950410"/>
<dbReference type="KEGG" id="sly:3950410"/>
<dbReference type="eggNOG" id="KOG4845">
    <property type="taxonomic scope" value="Eukaryota"/>
</dbReference>
<dbReference type="InParanoid" id="Q2A7B8"/>
<dbReference type="OrthoDB" id="564260at2759"/>
<dbReference type="Proteomes" id="UP000004994">
    <property type="component" value="Chloroplast"/>
</dbReference>
<dbReference type="ExpressionAtlas" id="Q2A7B8">
    <property type="expression patterns" value="baseline and differential"/>
</dbReference>
<dbReference type="GO" id="GO:0009535">
    <property type="term" value="C:chloroplast thylakoid membrane"/>
    <property type="evidence" value="ECO:0007669"/>
    <property type="project" value="UniProtKB-SubCell"/>
</dbReference>
<dbReference type="GO" id="GO:0008137">
    <property type="term" value="F:NADH dehydrogenase (ubiquinone) activity"/>
    <property type="evidence" value="ECO:0007669"/>
    <property type="project" value="InterPro"/>
</dbReference>
<dbReference type="GO" id="GO:0048039">
    <property type="term" value="F:ubiquinone binding"/>
    <property type="evidence" value="ECO:0000318"/>
    <property type="project" value="GO_Central"/>
</dbReference>
<dbReference type="GO" id="GO:0009060">
    <property type="term" value="P:aerobic respiration"/>
    <property type="evidence" value="ECO:0000318"/>
    <property type="project" value="GO_Central"/>
</dbReference>
<dbReference type="GO" id="GO:0042773">
    <property type="term" value="P:ATP synthesis coupled electron transport"/>
    <property type="evidence" value="ECO:0007669"/>
    <property type="project" value="InterPro"/>
</dbReference>
<dbReference type="GO" id="GO:0015990">
    <property type="term" value="P:electron transport coupled proton transport"/>
    <property type="evidence" value="ECO:0000318"/>
    <property type="project" value="GO_Central"/>
</dbReference>
<dbReference type="HAMAP" id="MF_00491">
    <property type="entry name" value="NDH1_NuoM"/>
    <property type="match status" value="1"/>
</dbReference>
<dbReference type="InterPro" id="IPR022997">
    <property type="entry name" value="NADH_Q_OxRdtase_chain4"/>
</dbReference>
<dbReference type="InterPro" id="IPR010227">
    <property type="entry name" value="NADH_Q_OxRdtase_chainM/4"/>
</dbReference>
<dbReference type="InterPro" id="IPR003918">
    <property type="entry name" value="NADH_UbQ_OxRdtase"/>
</dbReference>
<dbReference type="InterPro" id="IPR001750">
    <property type="entry name" value="ND/Mrp_TM"/>
</dbReference>
<dbReference type="NCBIfam" id="TIGR01972">
    <property type="entry name" value="NDH_I_M"/>
    <property type="match status" value="1"/>
</dbReference>
<dbReference type="PANTHER" id="PTHR43507:SF21">
    <property type="entry name" value="NAD(P)H-QUINONE OXIDOREDUCTASE CHAIN 4, CHLOROPLASTIC"/>
    <property type="match status" value="1"/>
</dbReference>
<dbReference type="PANTHER" id="PTHR43507">
    <property type="entry name" value="NADH-UBIQUINONE OXIDOREDUCTASE CHAIN 4"/>
    <property type="match status" value="1"/>
</dbReference>
<dbReference type="Pfam" id="PF00361">
    <property type="entry name" value="Proton_antipo_M"/>
    <property type="match status" value="1"/>
</dbReference>
<dbReference type="PRINTS" id="PR01437">
    <property type="entry name" value="NUOXDRDTASE4"/>
</dbReference>